<proteinExistence type="inferred from homology"/>
<evidence type="ECO:0000255" key="1">
    <source>
        <dbReference type="HAMAP-Rule" id="MF_00434"/>
    </source>
</evidence>
<keyword id="KW-0456">Lyase</keyword>
<accession>C3K0W5</accession>
<dbReference type="EC" id="4.2.1.96" evidence="1"/>
<dbReference type="EMBL" id="AM181176">
    <property type="protein sequence ID" value="CAY51144.1"/>
    <property type="molecule type" value="Genomic_DNA"/>
</dbReference>
<dbReference type="RefSeq" id="WP_010208721.1">
    <property type="nucleotide sequence ID" value="NC_012660.1"/>
</dbReference>
<dbReference type="SMR" id="C3K0W5"/>
<dbReference type="STRING" id="294.SRM1_01488"/>
<dbReference type="eggNOG" id="COG2154">
    <property type="taxonomic scope" value="Bacteria"/>
</dbReference>
<dbReference type="HOGENOM" id="CLU_081974_2_2_6"/>
<dbReference type="OrthoDB" id="5294615at2"/>
<dbReference type="GO" id="GO:0008124">
    <property type="term" value="F:4-alpha-hydroxytetrahydrobiopterin dehydratase activity"/>
    <property type="evidence" value="ECO:0007669"/>
    <property type="project" value="UniProtKB-UniRule"/>
</dbReference>
<dbReference type="GO" id="GO:0006729">
    <property type="term" value="P:tetrahydrobiopterin biosynthetic process"/>
    <property type="evidence" value="ECO:0007669"/>
    <property type="project" value="InterPro"/>
</dbReference>
<dbReference type="CDD" id="cd00913">
    <property type="entry name" value="PCD_DCoH_subfamily_a"/>
    <property type="match status" value="1"/>
</dbReference>
<dbReference type="Gene3D" id="3.30.1360.20">
    <property type="entry name" value="Transcriptional coactivator/pterin dehydratase"/>
    <property type="match status" value="1"/>
</dbReference>
<dbReference type="HAMAP" id="MF_00434">
    <property type="entry name" value="Pterin_4_alpha"/>
    <property type="match status" value="1"/>
</dbReference>
<dbReference type="InterPro" id="IPR036428">
    <property type="entry name" value="PCD_sf"/>
</dbReference>
<dbReference type="InterPro" id="IPR050376">
    <property type="entry name" value="Pterin-4-alpha-carb_dehyd"/>
</dbReference>
<dbReference type="InterPro" id="IPR001533">
    <property type="entry name" value="Pterin_deHydtase"/>
</dbReference>
<dbReference type="NCBIfam" id="NF002016">
    <property type="entry name" value="PRK00823.1-1"/>
    <property type="match status" value="1"/>
</dbReference>
<dbReference type="PANTHER" id="PTHR42805">
    <property type="entry name" value="PTERIN-4-ALPHA-CARBINOLAMINE DEHYDRATASE-RELATED"/>
    <property type="match status" value="1"/>
</dbReference>
<dbReference type="PANTHER" id="PTHR42805:SF1">
    <property type="entry name" value="PTERIN-4-ALPHA-CARBINOLAMINE DEHYDRATASE-RELATED"/>
    <property type="match status" value="1"/>
</dbReference>
<dbReference type="Pfam" id="PF01329">
    <property type="entry name" value="Pterin_4a"/>
    <property type="match status" value="1"/>
</dbReference>
<dbReference type="SUPFAM" id="SSF55248">
    <property type="entry name" value="PCD-like"/>
    <property type="match status" value="1"/>
</dbReference>
<feature type="chain" id="PRO_1000206070" description="Putative pterin-4-alpha-carbinolamine dehydratase">
    <location>
        <begin position="1"/>
        <end position="118"/>
    </location>
</feature>
<gene>
    <name type="ordered locus">PFLU_4459</name>
</gene>
<name>PHS_PSEFS</name>
<comment type="catalytic activity">
    <reaction evidence="1">
        <text>(4aS,6R)-4a-hydroxy-L-erythro-5,6,7,8-tetrahydrobiopterin = (6R)-L-erythro-6,7-dihydrobiopterin + H2O</text>
        <dbReference type="Rhea" id="RHEA:11920"/>
        <dbReference type="ChEBI" id="CHEBI:15377"/>
        <dbReference type="ChEBI" id="CHEBI:15642"/>
        <dbReference type="ChEBI" id="CHEBI:43120"/>
        <dbReference type="EC" id="4.2.1.96"/>
    </reaction>
</comment>
<comment type="similarity">
    <text evidence="1">Belongs to the pterin-4-alpha-carbinolamine dehydratase family.</text>
</comment>
<organism>
    <name type="scientific">Pseudomonas fluorescens (strain SBW25)</name>
    <dbReference type="NCBI Taxonomy" id="216595"/>
    <lineage>
        <taxon>Bacteria</taxon>
        <taxon>Pseudomonadati</taxon>
        <taxon>Pseudomonadota</taxon>
        <taxon>Gammaproteobacteria</taxon>
        <taxon>Pseudomonadales</taxon>
        <taxon>Pseudomonadaceae</taxon>
        <taxon>Pseudomonas</taxon>
    </lineage>
</organism>
<protein>
    <recommendedName>
        <fullName evidence="1">Putative pterin-4-alpha-carbinolamine dehydratase</fullName>
        <shortName evidence="1">PHS</shortName>
        <ecNumber evidence="1">4.2.1.96</ecNumber>
    </recommendedName>
    <alternativeName>
        <fullName evidence="1">4-alpha-hydroxy-tetrahydropterin dehydratase</fullName>
    </alternativeName>
    <alternativeName>
        <fullName evidence="1">Pterin carbinolamine dehydratase</fullName>
        <shortName evidence="1">PCD</shortName>
    </alternativeName>
</protein>
<reference key="1">
    <citation type="journal article" date="2009" name="Genome Biol.">
        <title>Genomic and genetic analyses of diversity and plant interactions of Pseudomonas fluorescens.</title>
        <authorList>
            <person name="Silby M.W."/>
            <person name="Cerdeno-Tarraga A.M."/>
            <person name="Vernikos G.S."/>
            <person name="Giddens S.R."/>
            <person name="Jackson R.W."/>
            <person name="Preston G.M."/>
            <person name="Zhang X.-X."/>
            <person name="Moon C.D."/>
            <person name="Gehrig S.M."/>
            <person name="Godfrey S.A.C."/>
            <person name="Knight C.G."/>
            <person name="Malone J.G."/>
            <person name="Robinson Z."/>
            <person name="Spiers A.J."/>
            <person name="Harris S."/>
            <person name="Challis G.L."/>
            <person name="Yaxley A.M."/>
            <person name="Harris D."/>
            <person name="Seeger K."/>
            <person name="Murphy L."/>
            <person name="Rutter S."/>
            <person name="Squares R."/>
            <person name="Quail M.A."/>
            <person name="Saunders E."/>
            <person name="Mavromatis K."/>
            <person name="Brettin T.S."/>
            <person name="Bentley S.D."/>
            <person name="Hothersall J."/>
            <person name="Stephens E."/>
            <person name="Thomas C.M."/>
            <person name="Parkhill J."/>
            <person name="Levy S.B."/>
            <person name="Rainey P.B."/>
            <person name="Thomson N.R."/>
        </authorList>
    </citation>
    <scope>NUCLEOTIDE SEQUENCE [LARGE SCALE GENOMIC DNA]</scope>
    <source>
        <strain>SBW25</strain>
    </source>
</reference>
<sequence>MTTLNQAHCEACRADAPQVSDEELPVLLKQIPDWNIEVRDGVMQLEKVFLFKNFKFALAFTNAMGEISEAEGHHPGLLTEWGKVTVTWWSHSIKGLHRNDFIMAARTDEVAKDAEGRK</sequence>